<feature type="chain" id="PRO_0000118090" description="NADH-ubiquinone oxidoreductase chain 5">
    <location>
        <begin position="1"/>
        <end position="572"/>
    </location>
</feature>
<feature type="transmembrane region" description="Helical" evidence="2">
    <location>
        <begin position="4"/>
        <end position="24"/>
    </location>
</feature>
<feature type="transmembrane region" description="Helical" evidence="2">
    <location>
        <begin position="44"/>
        <end position="64"/>
    </location>
</feature>
<feature type="transmembrane region" description="Helical" evidence="2">
    <location>
        <begin position="86"/>
        <end position="106"/>
    </location>
</feature>
<feature type="transmembrane region" description="Helical" evidence="2">
    <location>
        <begin position="107"/>
        <end position="127"/>
    </location>
</feature>
<feature type="transmembrane region" description="Helical" evidence="2">
    <location>
        <begin position="147"/>
        <end position="167"/>
    </location>
</feature>
<feature type="transmembrane region" description="Helical" evidence="2">
    <location>
        <begin position="170"/>
        <end position="190"/>
    </location>
</feature>
<feature type="transmembrane region" description="Helical" evidence="2">
    <location>
        <begin position="217"/>
        <end position="237"/>
    </location>
</feature>
<feature type="transmembrane region" description="Helical" evidence="2">
    <location>
        <begin position="239"/>
        <end position="259"/>
    </location>
</feature>
<feature type="transmembrane region" description="Helical" evidence="2">
    <location>
        <begin position="268"/>
        <end position="288"/>
    </location>
</feature>
<feature type="transmembrane region" description="Helical" evidence="2">
    <location>
        <begin position="294"/>
        <end position="314"/>
    </location>
</feature>
<feature type="transmembrane region" description="Helical" evidence="2">
    <location>
        <begin position="337"/>
        <end position="357"/>
    </location>
</feature>
<feature type="transmembrane region" description="Helical" evidence="2">
    <location>
        <begin position="372"/>
        <end position="394"/>
    </location>
</feature>
<feature type="transmembrane region" description="Helical" evidence="2">
    <location>
        <begin position="422"/>
        <end position="442"/>
    </location>
</feature>
<feature type="transmembrane region" description="Helical" evidence="2">
    <location>
        <begin position="457"/>
        <end position="477"/>
    </location>
</feature>
<feature type="transmembrane region" description="Helical" evidence="2">
    <location>
        <begin position="490"/>
        <end position="510"/>
    </location>
</feature>
<feature type="transmembrane region" description="Helical" evidence="2">
    <location>
        <begin position="552"/>
        <end position="572"/>
    </location>
</feature>
<feature type="sequence conflict" description="In Ref. 1; AAA69710/AAC47818." evidence="3" ref="1">
    <original>I</original>
    <variation>IGI</variation>
    <location>
        <position position="331"/>
    </location>
</feature>
<feature type="helix" evidence="4">
    <location>
        <begin position="1"/>
        <end position="26"/>
    </location>
</feature>
<feature type="strand" evidence="4">
    <location>
        <begin position="30"/>
        <end position="39"/>
    </location>
</feature>
<feature type="strand" evidence="4">
    <location>
        <begin position="42"/>
        <end position="50"/>
    </location>
</feature>
<feature type="helix" evidence="4">
    <location>
        <begin position="52"/>
        <end position="75"/>
    </location>
</feature>
<feature type="strand" evidence="4">
    <location>
        <begin position="76"/>
        <end position="80"/>
    </location>
</feature>
<feature type="helix" evidence="4">
    <location>
        <begin position="82"/>
        <end position="101"/>
    </location>
</feature>
<feature type="helix" evidence="4">
    <location>
        <begin position="105"/>
        <end position="123"/>
    </location>
</feature>
<feature type="helix" evidence="4">
    <location>
        <begin position="129"/>
        <end position="156"/>
    </location>
</feature>
<feature type="helix" evidence="4">
    <location>
        <begin position="157"/>
        <end position="159"/>
    </location>
</feature>
<feature type="helix" evidence="4">
    <location>
        <begin position="164"/>
        <end position="167"/>
    </location>
</feature>
<feature type="turn" evidence="4">
    <location>
        <begin position="168"/>
        <end position="170"/>
    </location>
</feature>
<feature type="strand" evidence="4">
    <location>
        <begin position="171"/>
        <end position="174"/>
    </location>
</feature>
<feature type="helix" evidence="4">
    <location>
        <begin position="175"/>
        <end position="192"/>
    </location>
</feature>
<feature type="helix" evidence="4">
    <location>
        <begin position="197"/>
        <end position="199"/>
    </location>
</feature>
<feature type="helix" evidence="4">
    <location>
        <begin position="200"/>
        <end position="203"/>
    </location>
</feature>
<feature type="helix" evidence="4">
    <location>
        <begin position="204"/>
        <end position="206"/>
    </location>
</feature>
<feature type="helix" evidence="4">
    <location>
        <begin position="209"/>
        <end position="215"/>
    </location>
</feature>
<feature type="helix" evidence="4">
    <location>
        <begin position="220"/>
        <end position="230"/>
    </location>
</feature>
<feature type="helix" evidence="4">
    <location>
        <begin position="232"/>
        <end position="237"/>
    </location>
</feature>
<feature type="helix" evidence="4">
    <location>
        <begin position="239"/>
        <end position="258"/>
    </location>
</feature>
<feature type="turn" evidence="4">
    <location>
        <begin position="259"/>
        <end position="261"/>
    </location>
</feature>
<feature type="helix" evidence="4">
    <location>
        <begin position="265"/>
        <end position="286"/>
    </location>
</feature>
<feature type="helix" evidence="4">
    <location>
        <begin position="290"/>
        <end position="316"/>
    </location>
</feature>
<feature type="turn" evidence="4">
    <location>
        <begin position="323"/>
        <end position="325"/>
    </location>
</feature>
<feature type="helix" evidence="4">
    <location>
        <begin position="329"/>
        <end position="332"/>
    </location>
</feature>
<feature type="helix" evidence="4">
    <location>
        <begin position="334"/>
        <end position="348"/>
    </location>
</feature>
<feature type="helix" evidence="4">
    <location>
        <begin position="354"/>
        <end position="368"/>
    </location>
</feature>
<feature type="helix" evidence="4">
    <location>
        <begin position="373"/>
        <end position="397"/>
    </location>
</feature>
<feature type="strand" evidence="4">
    <location>
        <begin position="406"/>
        <end position="408"/>
    </location>
</feature>
<feature type="helix" evidence="4">
    <location>
        <begin position="415"/>
        <end position="439"/>
    </location>
</feature>
<feature type="helix" evidence="4">
    <location>
        <begin position="450"/>
        <end position="453"/>
    </location>
</feature>
<feature type="helix" evidence="4">
    <location>
        <begin position="455"/>
        <end position="471"/>
    </location>
</feature>
<feature type="helix" evidence="4">
    <location>
        <begin position="480"/>
        <end position="483"/>
    </location>
</feature>
<feature type="helix" evidence="4">
    <location>
        <begin position="485"/>
        <end position="492"/>
    </location>
</feature>
<feature type="helix" evidence="4">
    <location>
        <begin position="493"/>
        <end position="496"/>
    </location>
</feature>
<feature type="helix" evidence="4">
    <location>
        <begin position="497"/>
        <end position="502"/>
    </location>
</feature>
<feature type="helix" evidence="4">
    <location>
        <begin position="507"/>
        <end position="519"/>
    </location>
</feature>
<feature type="turn" evidence="4">
    <location>
        <begin position="520"/>
        <end position="523"/>
    </location>
</feature>
<feature type="helix" evidence="4">
    <location>
        <begin position="524"/>
        <end position="527"/>
    </location>
</feature>
<feature type="helix" evidence="4">
    <location>
        <begin position="530"/>
        <end position="548"/>
    </location>
</feature>
<feature type="helix" evidence="4">
    <location>
        <begin position="552"/>
        <end position="571"/>
    </location>
</feature>
<keyword id="KW-0002">3D-structure</keyword>
<keyword id="KW-0249">Electron transport</keyword>
<keyword id="KW-0472">Membrane</keyword>
<keyword id="KW-0496">Mitochondrion</keyword>
<keyword id="KW-0999">Mitochondrion inner membrane</keyword>
<keyword id="KW-0520">NAD</keyword>
<keyword id="KW-1185">Reference proteome</keyword>
<keyword id="KW-0679">Respiratory chain</keyword>
<keyword id="KW-1278">Translocase</keyword>
<keyword id="KW-0812">Transmembrane</keyword>
<keyword id="KW-1133">Transmembrane helix</keyword>
<keyword id="KW-0813">Transport</keyword>
<keyword id="KW-0830">Ubiquinone</keyword>
<proteinExistence type="evidence at protein level"/>
<organism>
    <name type="scientific">Drosophila melanogaster</name>
    <name type="common">Fruit fly</name>
    <dbReference type="NCBI Taxonomy" id="7227"/>
    <lineage>
        <taxon>Eukaryota</taxon>
        <taxon>Metazoa</taxon>
        <taxon>Ecdysozoa</taxon>
        <taxon>Arthropoda</taxon>
        <taxon>Hexapoda</taxon>
        <taxon>Insecta</taxon>
        <taxon>Pterygota</taxon>
        <taxon>Neoptera</taxon>
        <taxon>Endopterygota</taxon>
        <taxon>Diptera</taxon>
        <taxon>Brachycera</taxon>
        <taxon>Muscomorpha</taxon>
        <taxon>Ephydroidea</taxon>
        <taxon>Drosophilidae</taxon>
        <taxon>Drosophila</taxon>
        <taxon>Sophophora</taxon>
    </lineage>
</organism>
<comment type="function">
    <text evidence="1">Core subunit of the mitochondrial membrane respiratory chain NADH dehydrogenase (Complex I) that is believed to belong to the minimal assembly required for catalysis. Complex I functions in the transfer of electrons from NADH to the respiratory chain. The immediate electron acceptor for the enzyme is believed to be ubiquinone (By similarity).</text>
</comment>
<comment type="catalytic activity">
    <reaction>
        <text>a ubiquinone + NADH + 5 H(+)(in) = a ubiquinol + NAD(+) + 4 H(+)(out)</text>
        <dbReference type="Rhea" id="RHEA:29091"/>
        <dbReference type="Rhea" id="RHEA-COMP:9565"/>
        <dbReference type="Rhea" id="RHEA-COMP:9566"/>
        <dbReference type="ChEBI" id="CHEBI:15378"/>
        <dbReference type="ChEBI" id="CHEBI:16389"/>
        <dbReference type="ChEBI" id="CHEBI:17976"/>
        <dbReference type="ChEBI" id="CHEBI:57540"/>
        <dbReference type="ChEBI" id="CHEBI:57945"/>
        <dbReference type="EC" id="7.1.1.2"/>
    </reaction>
</comment>
<comment type="subcellular location">
    <subcellularLocation>
        <location evidence="1">Mitochondrion inner membrane</location>
        <topology evidence="1">Multi-pass membrane protein</topology>
    </subcellularLocation>
</comment>
<comment type="similarity">
    <text evidence="3">Belongs to the complex I subunit 5 family.</text>
</comment>
<comment type="sequence caution" evidence="3">
    <conflict type="erroneous initiation">
        <sequence resource="EMBL-CDS" id="CAB91058"/>
    </conflict>
</comment>
<dbReference type="EC" id="7.1.1.2"/>
<dbReference type="EMBL" id="M37275">
    <property type="protein sequence ID" value="AAA69710.1"/>
    <property type="status" value="ALT_TERM"/>
    <property type="molecule type" value="Genomic_DNA"/>
</dbReference>
<dbReference type="EMBL" id="AF200828">
    <property type="protein sequence ID" value="AAF77233.1"/>
    <property type="molecule type" value="Genomic_DNA"/>
</dbReference>
<dbReference type="EMBL" id="AF200829">
    <property type="protein sequence ID" value="AAF77251.1"/>
    <property type="molecule type" value="Genomic_DNA"/>
</dbReference>
<dbReference type="EMBL" id="AJ400907">
    <property type="protein sequence ID" value="CAB91058.1"/>
    <property type="status" value="ALT_INIT"/>
    <property type="molecule type" value="Genomic_DNA"/>
</dbReference>
<dbReference type="EMBL" id="U37541">
    <property type="protein sequence ID" value="AAC47818.1"/>
    <property type="molecule type" value="Genomic_DNA"/>
</dbReference>
<dbReference type="EMBL" id="KJ947872">
    <property type="protein sequence ID" value="AIC64011.1"/>
    <property type="molecule type" value="Genomic_DNA"/>
</dbReference>
<dbReference type="EMBL" id="S76764">
    <property type="protein sequence ID" value="AAB33356.1"/>
    <property type="molecule type" value="Genomic_DNA"/>
</dbReference>
<dbReference type="PIR" id="S01186">
    <property type="entry name" value="S01186"/>
</dbReference>
<dbReference type="RefSeq" id="YP_009047273.1">
    <property type="nucleotide sequence ID" value="NC_024511.2"/>
</dbReference>
<dbReference type="PDB" id="8B9Z">
    <property type="method" value="EM"/>
    <property type="resolution" value="3.28 A"/>
    <property type="chains" value="L=1-572"/>
</dbReference>
<dbReference type="PDB" id="8BA0">
    <property type="method" value="EM"/>
    <property type="resolution" value="3.68 A"/>
    <property type="chains" value="L=1-572"/>
</dbReference>
<dbReference type="PDBsum" id="8B9Z"/>
<dbReference type="PDBsum" id="8BA0"/>
<dbReference type="SMR" id="P18932"/>
<dbReference type="BioGRID" id="2595078">
    <property type="interactions" value="1"/>
</dbReference>
<dbReference type="ComplexPortal" id="CPX-8628">
    <property type="entry name" value="Mitochondrial respiratory chain complex I"/>
</dbReference>
<dbReference type="ComplexPortal" id="CPX-8638">
    <property type="entry name" value="Mitochondrial respiratory chain complex I, testis-specific variant"/>
</dbReference>
<dbReference type="FunCoup" id="P18932">
    <property type="interactions" value="156"/>
</dbReference>
<dbReference type="STRING" id="7227.FBpp0390633"/>
<dbReference type="GlyGen" id="P18932">
    <property type="glycosylation" value="1 site"/>
</dbReference>
<dbReference type="PaxDb" id="7227-FBpp0100182"/>
<dbReference type="EnsemblMetazoa" id="FBtr0433501">
    <property type="protein sequence ID" value="FBpp0390633"/>
    <property type="gene ID" value="FBgn0013684"/>
</dbReference>
<dbReference type="GeneID" id="19893549"/>
<dbReference type="KEGG" id="dme:Dmel_CG34083"/>
<dbReference type="AGR" id="FB:FBgn0013684"/>
<dbReference type="CTD" id="4540"/>
<dbReference type="FlyBase" id="FBgn0013684">
    <property type="gene designation" value="mt:ND5"/>
</dbReference>
<dbReference type="VEuPathDB" id="VectorBase:FBgn0013684"/>
<dbReference type="eggNOG" id="KOG4668">
    <property type="taxonomic scope" value="Eukaryota"/>
</dbReference>
<dbReference type="GeneTree" id="ENSGT00730000111303"/>
<dbReference type="HOGENOM" id="CLU_007100_6_0_1"/>
<dbReference type="InParanoid" id="P18932"/>
<dbReference type="OMA" id="MDWGWAR"/>
<dbReference type="OrthoDB" id="10069788at2759"/>
<dbReference type="PhylomeDB" id="P18932"/>
<dbReference type="Reactome" id="R-DME-611105">
    <property type="pathway name" value="Respiratory electron transport"/>
</dbReference>
<dbReference type="Reactome" id="R-DME-6799198">
    <property type="pathway name" value="Complex I biogenesis"/>
</dbReference>
<dbReference type="BioGRID-ORCS" id="19893549">
    <property type="hits" value="0 hits in 1 CRISPR screen"/>
</dbReference>
<dbReference type="ChiTaRS" id="ND5">
    <property type="organism name" value="fly"/>
</dbReference>
<dbReference type="GenomeRNAi" id="19893549"/>
<dbReference type="PRO" id="PR:P18932"/>
<dbReference type="Proteomes" id="UP000000803">
    <property type="component" value="Mitochondrion"/>
</dbReference>
<dbReference type="Bgee" id="FBgn0013684">
    <property type="expression patterns" value="Expressed in adult class III enteroendocrine cell in adult midgut (Drosophila) and 263 other cell types or tissues"/>
</dbReference>
<dbReference type="ExpressionAtlas" id="P18932">
    <property type="expression patterns" value="baseline and differential"/>
</dbReference>
<dbReference type="GO" id="GO:0005743">
    <property type="term" value="C:mitochondrial inner membrane"/>
    <property type="evidence" value="ECO:0000305"/>
    <property type="project" value="FlyBase"/>
</dbReference>
<dbReference type="GO" id="GO:0045271">
    <property type="term" value="C:respiratory chain complex I"/>
    <property type="evidence" value="ECO:0000314"/>
    <property type="project" value="FlyBase"/>
</dbReference>
<dbReference type="GO" id="GO:0008137">
    <property type="term" value="F:NADH dehydrogenase (ubiquinone) activity"/>
    <property type="evidence" value="ECO:0007669"/>
    <property type="project" value="UniProtKB-EC"/>
</dbReference>
<dbReference type="GO" id="GO:0015990">
    <property type="term" value="P:electron transport coupled proton transport"/>
    <property type="evidence" value="ECO:0000318"/>
    <property type="project" value="GO_Central"/>
</dbReference>
<dbReference type="GO" id="GO:0006120">
    <property type="term" value="P:mitochondrial electron transport, NADH to ubiquinone"/>
    <property type="evidence" value="ECO:0000305"/>
    <property type="project" value="FlyBase"/>
</dbReference>
<dbReference type="InterPro" id="IPR010934">
    <property type="entry name" value="NADH_DH_su5_C"/>
</dbReference>
<dbReference type="InterPro" id="IPR001750">
    <property type="entry name" value="ND/Mrp_TM"/>
</dbReference>
<dbReference type="InterPro" id="IPR003945">
    <property type="entry name" value="NU5C-like"/>
</dbReference>
<dbReference type="InterPro" id="IPR001516">
    <property type="entry name" value="Proton_antipo_N"/>
</dbReference>
<dbReference type="PANTHER" id="PTHR42829">
    <property type="entry name" value="NADH-UBIQUINONE OXIDOREDUCTASE CHAIN 5"/>
    <property type="match status" value="1"/>
</dbReference>
<dbReference type="PANTHER" id="PTHR42829:SF2">
    <property type="entry name" value="NADH-UBIQUINONE OXIDOREDUCTASE CHAIN 5"/>
    <property type="match status" value="1"/>
</dbReference>
<dbReference type="Pfam" id="PF06455">
    <property type="entry name" value="NADH5_C"/>
    <property type="match status" value="1"/>
</dbReference>
<dbReference type="Pfam" id="PF00361">
    <property type="entry name" value="Proton_antipo_M"/>
    <property type="match status" value="1"/>
</dbReference>
<dbReference type="Pfam" id="PF00662">
    <property type="entry name" value="Proton_antipo_N"/>
    <property type="match status" value="1"/>
</dbReference>
<dbReference type="PRINTS" id="PR01434">
    <property type="entry name" value="NADHDHGNASE5"/>
</dbReference>
<dbReference type="PRINTS" id="PR01435">
    <property type="entry name" value="NPOXDRDTASE5"/>
</dbReference>
<protein>
    <recommendedName>
        <fullName>NADH-ubiquinone oxidoreductase chain 5</fullName>
        <ecNumber>7.1.1.2</ecNumber>
    </recommendedName>
    <alternativeName>
        <fullName>NADH dehydrogenase subunit 5</fullName>
    </alternativeName>
</protein>
<name>NU5M_DROME</name>
<geneLocation type="mitochondrion"/>
<reference key="1">
    <citation type="journal article" date="1988" name="Genetics">
        <title>Drosophila melanogaster mitochondrial DNA: gene organization and evolutionary considerations.</title>
        <authorList>
            <person name="Garesse R."/>
        </authorList>
    </citation>
    <scope>NUCLEOTIDE SEQUENCE [GENOMIC DNA]</scope>
    <source>
        <strain>Bretagne</strain>
    </source>
</reference>
<reference key="2">
    <citation type="journal article" date="2000" name="J. Mol. Evol.">
        <title>Comparative genomics of mitochondrial DNA in members of the Drosophila melanogaster subgroup.</title>
        <authorList>
            <person name="Ballard J.W.O."/>
        </authorList>
    </citation>
    <scope>NUCLEOTIDE SEQUENCE [GENOMIC DNA]</scope>
    <source>
        <strain>Oregon-R</strain>
        <strain>Zimbabwe 53</strain>
    </source>
</reference>
<reference key="3">
    <citation type="journal article" date="2001" name="Heredity">
        <title>I-R system of hybrid dysgenesis in Drosophila melanogaster: analysis of the mitochondrial DNA in reactive strains exhibiting different potentials for I factor transposition.</title>
        <authorList>
            <person name="Azou Y."/>
            <person name="Bregliano J.C."/>
        </authorList>
    </citation>
    <scope>NUCLEOTIDE SEQUENCE [GENOMIC DNA]</scope>
    <source>
        <strain>Paris</strain>
    </source>
</reference>
<reference key="4">
    <citation type="journal article" date="1995" name="Insect Mol. Biol.">
        <title>Drosophila melanogaster mitochondrial DNA: completion of the nucleotide sequence and evolutionary comparisons.</title>
        <authorList>
            <person name="Lewis D.L."/>
            <person name="Farr C.L."/>
            <person name="Kaguni L.S."/>
        </authorList>
    </citation>
    <scope>NUCLEOTIDE SEQUENCE [LARGE SCALE GENOMIC DNA]</scope>
</reference>
<reference key="5">
    <citation type="submission" date="2014-08" db="EMBL/GenBank/DDBJ databases">
        <authorList>
            <person name="Wan K."/>
            <person name="Celniker S."/>
        </authorList>
    </citation>
    <scope>NUCLEOTIDE SEQUENCE [LARGE SCALE GENOMIC DNA]</scope>
    <source>
        <strain>Berkeley</strain>
    </source>
</reference>
<reference key="6">
    <citation type="journal article" date="1994" name="Genetics">
        <title>Neutral and non-neutral evolution of Drosophila mitochondrial DNA.</title>
        <authorList>
            <person name="Rand D.M."/>
            <person name="Dorfsman M."/>
            <person name="Kann L.M."/>
        </authorList>
    </citation>
    <scope>NUCLEOTIDE SEQUENCE [GENOMIC DNA] OF 6-510</scope>
</reference>
<gene>
    <name type="primary">mt:ND5</name>
    <name type="synonym">NADH5</name>
    <name type="synonym">ND5</name>
</gene>
<evidence type="ECO:0000250" key="1"/>
<evidence type="ECO:0000255" key="2"/>
<evidence type="ECO:0000305" key="3"/>
<evidence type="ECO:0007829" key="4">
    <source>
        <dbReference type="PDB" id="8B9Z"/>
    </source>
</evidence>
<sequence length="572" mass="65145">MCSISFVNLISMSLSCFLLSLYFLLNDMIYFIEWELVSLNSMSIVMTFLFDWMSLLFMSFVLMISSLVIFYSKEYMMNDNHINRFIMLVLMFVLSMMLLIISPNLISILLGWDGLGLVSYCLVIYFQNIKSYNAGMLTALSNRIGDVALLLSIAWMLNYGSWNYIFYLEIMQNEFEMLMIGSLVMLAAMTKSAQIPFSSWLPAAMAAPTPVSALVHSSTLVTAGVYLLIRFNIILSTSWLGQLMLLLSGLTMFMAGLGANFEFDLKKIIALSTLSQLGLMMSILSMGFLKLAMFHLLTHALFKALLFMCAGAIIHNMNNSQDIRLMGGLSIHMPLTSACFNVSNLALCGMPFLAGFYSKDMILEIVSISNVNMFSFFLYYFSTGLTVSYSFRLVYYSMTGDLNCGSLNMLNDESWIMLRGMMGLLIMSIIGGSMLNWLIFPFPYMICLPIYMKLLTLFVCIVGGLFGYLISLSNLFFLNKSLFMYNLSTFLGSMWFMPYISTYGMIFYPLNYGQLVVKSFDQGWSEYFGGQHLYQKLSMYSKTLFLMHNNSLKIYLLLFVFWILILLILLFL</sequence>
<accession>P18932</accession>
<accession>Q36735</accession>
<accession>Q9MGN9</accession>
<accession>Q9MJC7</accession>